<organism evidence="2">
    <name type="scientific">Naegleria fowleri</name>
    <name type="common">Brain eating amoeba</name>
    <dbReference type="NCBI Taxonomy" id="5763"/>
    <lineage>
        <taxon>Eukaryota</taxon>
        <taxon>Discoba</taxon>
        <taxon>Heterolobosea</taxon>
        <taxon>Tetramitia</taxon>
        <taxon>Eutetramitia</taxon>
        <taxon>Vahlkampfiidae</taxon>
        <taxon>Naegleria</taxon>
    </lineage>
</organism>
<reference evidence="2" key="1">
    <citation type="submission" date="2003-12" db="UniProtKB">
        <title>Comparative study of protein profiles on pathogenic and nonpathogenic Naegleria species by 2D-PAGE.</title>
        <authorList>
            <person name="Omura M."/>
            <person name="Furushima-Shimogawara R."/>
            <person name="Izumiyama S."/>
            <person name="Endo T."/>
        </authorList>
    </citation>
    <scope>PROTEIN SEQUENCE</scope>
    <source>
        <strain>ATCC 30214 / Nf 66</strain>
    </source>
</reference>
<dbReference type="Gene3D" id="2.170.150.10">
    <property type="entry name" value="Metal Binding Protein, Guanine Nucleotide Exchange Factor, Chain A"/>
    <property type="match status" value="1"/>
</dbReference>
<dbReference type="InterPro" id="IPR011057">
    <property type="entry name" value="Mss4-like_sf"/>
</dbReference>
<dbReference type="InterPro" id="IPR011323">
    <property type="entry name" value="Mss4/transl-control_tumour"/>
</dbReference>
<dbReference type="InterPro" id="IPR034737">
    <property type="entry name" value="TCTP"/>
</dbReference>
<dbReference type="InterPro" id="IPR018105">
    <property type="entry name" value="Translational_control_tumour_p"/>
</dbReference>
<dbReference type="Pfam" id="PF00838">
    <property type="entry name" value="TCTP"/>
    <property type="match status" value="1"/>
</dbReference>
<dbReference type="SUPFAM" id="SSF51316">
    <property type="entry name" value="Mss4-like"/>
    <property type="match status" value="1"/>
</dbReference>
<dbReference type="PROSITE" id="PS51797">
    <property type="entry name" value="TCTP_3"/>
    <property type="match status" value="1"/>
</dbReference>
<evidence type="ECO:0000255" key="1">
    <source>
        <dbReference type="PROSITE-ProRule" id="PRU01133"/>
    </source>
</evidence>
<evidence type="ECO:0000305" key="2"/>
<protein>
    <recommendedName>
        <fullName>Unknown protein NF040 from 2D-PAGE</fullName>
    </recommendedName>
</protein>
<feature type="chain" id="PRO_0000055495" description="Unknown protein NF040 from 2D-PAGE">
    <location>
        <begin position="1"/>
        <end position="20" status="greater than"/>
    </location>
</feature>
<feature type="domain" description="TCTP" evidence="1">
    <location>
        <begin position="1"/>
        <end position="20" status="greater than"/>
    </location>
</feature>
<feature type="non-terminal residue" evidence="2">
    <location>
        <position position="20"/>
    </location>
</feature>
<proteinExistence type="evidence at protein level"/>
<name>NF40_NAEFO</name>
<sequence>MKVYTDIFTRDEFLSDSYPM</sequence>
<keyword id="KW-0903">Direct protein sequencing</keyword>
<comment type="miscellaneous">
    <text evidence="2">On the 2D-gel the determined pI of this unknown protein is: 5.1, its MW is: 20.9 kDa.</text>
</comment>
<comment type="similarity">
    <text evidence="1">Belongs to the TCTP family.</text>
</comment>
<accession>P83728</accession>